<reference key="1">
    <citation type="journal article" date="2004" name="Proc. Natl. Acad. Sci. U.S.A.">
        <title>Complete genomes of two clinical Staphylococcus aureus strains: evidence for the rapid evolution of virulence and drug resistance.</title>
        <authorList>
            <person name="Holden M.T.G."/>
            <person name="Feil E.J."/>
            <person name="Lindsay J.A."/>
            <person name="Peacock S.J."/>
            <person name="Day N.P.J."/>
            <person name="Enright M.C."/>
            <person name="Foster T.J."/>
            <person name="Moore C.E."/>
            <person name="Hurst L."/>
            <person name="Atkin R."/>
            <person name="Barron A."/>
            <person name="Bason N."/>
            <person name="Bentley S.D."/>
            <person name="Chillingworth C."/>
            <person name="Chillingworth T."/>
            <person name="Churcher C."/>
            <person name="Clark L."/>
            <person name="Corton C."/>
            <person name="Cronin A."/>
            <person name="Doggett J."/>
            <person name="Dowd L."/>
            <person name="Feltwell T."/>
            <person name="Hance Z."/>
            <person name="Harris B."/>
            <person name="Hauser H."/>
            <person name="Holroyd S."/>
            <person name="Jagels K."/>
            <person name="James K.D."/>
            <person name="Lennard N."/>
            <person name="Line A."/>
            <person name="Mayes R."/>
            <person name="Moule S."/>
            <person name="Mungall K."/>
            <person name="Ormond D."/>
            <person name="Quail M.A."/>
            <person name="Rabbinowitsch E."/>
            <person name="Rutherford K.M."/>
            <person name="Sanders M."/>
            <person name="Sharp S."/>
            <person name="Simmonds M."/>
            <person name="Stevens K."/>
            <person name="Whitehead S."/>
            <person name="Barrell B.G."/>
            <person name="Spratt B.G."/>
            <person name="Parkhill J."/>
        </authorList>
    </citation>
    <scope>NUCLEOTIDE SEQUENCE [LARGE SCALE GENOMIC DNA]</scope>
    <source>
        <strain>MRSA252</strain>
    </source>
</reference>
<feature type="chain" id="PRO_0000166848" description="Peptide chain release factor 2">
    <location>
        <begin position="1"/>
        <end position="369"/>
    </location>
</feature>
<feature type="modified residue" description="N5-methylglutamine" evidence="2">
    <location>
        <position position="252"/>
    </location>
</feature>
<evidence type="ECO:0000250" key="1"/>
<evidence type="ECO:0000255" key="2">
    <source>
        <dbReference type="HAMAP-Rule" id="MF_00094"/>
    </source>
</evidence>
<organism>
    <name type="scientific">Staphylococcus aureus (strain MRSA252)</name>
    <dbReference type="NCBI Taxonomy" id="282458"/>
    <lineage>
        <taxon>Bacteria</taxon>
        <taxon>Bacillati</taxon>
        <taxon>Bacillota</taxon>
        <taxon>Bacilli</taxon>
        <taxon>Bacillales</taxon>
        <taxon>Staphylococcaceae</taxon>
        <taxon>Staphylococcus</taxon>
    </lineage>
</organism>
<gene>
    <name evidence="2" type="primary">prfB</name>
    <name type="ordered locus">SAR0808</name>
</gene>
<protein>
    <recommendedName>
        <fullName evidence="2">Peptide chain release factor 2</fullName>
        <shortName evidence="2">RF-2</shortName>
    </recommendedName>
</protein>
<proteinExistence type="inferred from homology"/>
<name>RF2_STAAR</name>
<sequence length="369" mass="42258">MELSEIKRNIDKYNQDLTQIRGSLDLENKETNIQEYEEMMAEPNFWDNQTKAQDIIDKNNALKAIVNGYKTLQAEVDDMDATWDLLQEEFDGEMKEDLEQEVINFKAKVDEYELQLLLDGPHDANNAILELHPGAGGTESQDWANMLFRMYQRYCEKKGFKVKTVDYLPGDEAGIKSVTLLIKGHNAYGYLKAEKGVHRLVRISPFDSSGRRHTSFASCDVIPDFNNDEIEIEINPDDITVDTFRASGAGGQHINKTESAIRITHHPSGIVVNNQNERSQIKNREAAMKMLKSKLYQLKLEEQAREMAEIRGEQKEIGWGSQIRSYVFHPYSMVKDHRTNEETGKVDAVMDGDIGPFIESYLRQTMSHD</sequence>
<dbReference type="EMBL" id="BX571856">
    <property type="protein sequence ID" value="CAG39818.1"/>
    <property type="molecule type" value="Genomic_DNA"/>
</dbReference>
<dbReference type="SMR" id="Q6GIN7"/>
<dbReference type="KEGG" id="sar:SAR0808"/>
<dbReference type="HOGENOM" id="CLU_221244_2_2_9"/>
<dbReference type="Proteomes" id="UP000000596">
    <property type="component" value="Chromosome"/>
</dbReference>
<dbReference type="GO" id="GO:0005737">
    <property type="term" value="C:cytoplasm"/>
    <property type="evidence" value="ECO:0007669"/>
    <property type="project" value="UniProtKB-SubCell"/>
</dbReference>
<dbReference type="GO" id="GO:0016149">
    <property type="term" value="F:translation release factor activity, codon specific"/>
    <property type="evidence" value="ECO:0007669"/>
    <property type="project" value="UniProtKB-UniRule"/>
</dbReference>
<dbReference type="GO" id="GO:0075523">
    <property type="term" value="P:viral translational frameshifting"/>
    <property type="evidence" value="ECO:0007669"/>
    <property type="project" value="UniProtKB-KW"/>
</dbReference>
<dbReference type="FunFam" id="3.30.160.20:FF:000010">
    <property type="entry name" value="Peptide chain release factor 2"/>
    <property type="match status" value="1"/>
</dbReference>
<dbReference type="Gene3D" id="3.30.160.20">
    <property type="match status" value="1"/>
</dbReference>
<dbReference type="Gene3D" id="3.30.70.1660">
    <property type="match status" value="1"/>
</dbReference>
<dbReference type="Gene3D" id="1.20.58.410">
    <property type="entry name" value="Release factor"/>
    <property type="match status" value="1"/>
</dbReference>
<dbReference type="HAMAP" id="MF_00094">
    <property type="entry name" value="Rel_fac_2"/>
    <property type="match status" value="1"/>
</dbReference>
<dbReference type="InterPro" id="IPR005139">
    <property type="entry name" value="PCRF"/>
</dbReference>
<dbReference type="InterPro" id="IPR000352">
    <property type="entry name" value="Pep_chain_release_fac_I"/>
</dbReference>
<dbReference type="InterPro" id="IPR045853">
    <property type="entry name" value="Pep_chain_release_fac_I_sf"/>
</dbReference>
<dbReference type="InterPro" id="IPR004374">
    <property type="entry name" value="PrfB"/>
</dbReference>
<dbReference type="NCBIfam" id="TIGR00020">
    <property type="entry name" value="prfB"/>
    <property type="match status" value="1"/>
</dbReference>
<dbReference type="PANTHER" id="PTHR43116:SF3">
    <property type="entry name" value="CLASS I PEPTIDE CHAIN RELEASE FACTOR"/>
    <property type="match status" value="1"/>
</dbReference>
<dbReference type="PANTHER" id="PTHR43116">
    <property type="entry name" value="PEPTIDE CHAIN RELEASE FACTOR 2"/>
    <property type="match status" value="1"/>
</dbReference>
<dbReference type="Pfam" id="PF03462">
    <property type="entry name" value="PCRF"/>
    <property type="match status" value="1"/>
</dbReference>
<dbReference type="Pfam" id="PF00472">
    <property type="entry name" value="RF-1"/>
    <property type="match status" value="1"/>
</dbReference>
<dbReference type="SMART" id="SM00937">
    <property type="entry name" value="PCRF"/>
    <property type="match status" value="1"/>
</dbReference>
<dbReference type="SUPFAM" id="SSF75620">
    <property type="entry name" value="Release factor"/>
    <property type="match status" value="1"/>
</dbReference>
<dbReference type="PROSITE" id="PS00745">
    <property type="entry name" value="RF_PROK_I"/>
    <property type="match status" value="1"/>
</dbReference>
<comment type="function">
    <text evidence="2">Peptide chain release factor 2 directs the termination of translation in response to the peptide chain termination codons UGA and UAA.</text>
</comment>
<comment type="subcellular location">
    <subcellularLocation>
        <location evidence="2">Cytoplasm</location>
    </subcellularLocation>
</comment>
<comment type="PTM">
    <text evidence="2">Methylated by PrmC. Methylation increases the termination efficiency of RF2.</text>
</comment>
<comment type="miscellaneous">
    <text evidence="1">The gene for this protein contains a UGA in-frame termination codon after Leu-24; a naturally occurring frameshift enables complete translation of RF-2. This provides a mechanism for the protein to regulate its own production (By similarity).</text>
</comment>
<comment type="similarity">
    <text evidence="2">Belongs to the prokaryotic/mitochondrial release factor family.</text>
</comment>
<accession>Q6GIN7</accession>
<keyword id="KW-0963">Cytoplasm</keyword>
<keyword id="KW-0488">Methylation</keyword>
<keyword id="KW-0648">Protein biosynthesis</keyword>
<keyword id="KW-0688">Ribosomal frameshifting</keyword>